<sequence length="220" mass="24355">MGAAARSLPLAFCLLLLGTLLPRADACSCSPVHPQQAFCNADIVIRAKAVNKKEVDSGNDIYGNPIKRIQYEIKQIKMFKGPDQDIEFIYTAPAAAVCGVSLDIGGKKEYLIAGKAEGNGNMHITLCDFIVPWDTLSATQKKSLNHRYQMGCECKITRCPMIPCYISSPDECLWMDWVTEKNINGHQAKFFACIKRSDGSCAWYRGAAPPKQEFLDIEDP</sequence>
<protein>
    <recommendedName>
        <fullName>Metalloproteinase inhibitor 2</fullName>
    </recommendedName>
    <alternativeName>
        <fullName>Collagenase inhibitor</fullName>
    </alternativeName>
    <alternativeName>
        <fullName>Tissue inhibitor of metalloproteinases 2</fullName>
        <shortName>TIMP-2</shortName>
    </alternativeName>
</protein>
<proteinExistence type="evidence at protein level"/>
<reference key="1">
    <citation type="journal article" date="1990" name="Proc. Natl. Acad. Sci. U.S.A.">
        <title>cDNA cloning and expression of a metalloproteinase inhibitor related to tissue inhibitor of metalloproteinases.</title>
        <authorList>
            <person name="Boone T.C."/>
            <person name="Johnson M.J."/>
            <person name="de Clerck Y.A."/>
            <person name="Langley K.E."/>
        </authorList>
    </citation>
    <scope>NUCLEOTIDE SEQUENCE [MRNA]</scope>
</reference>
<reference key="2">
    <citation type="submission" date="2005-08" db="EMBL/GenBank/DDBJ databases">
        <authorList>
            <consortium name="NIH - Mammalian Gene Collection (MGC) project"/>
        </authorList>
    </citation>
    <scope>NUCLEOTIDE SEQUENCE [LARGE SCALE MRNA]</scope>
    <source>
        <strain>Crossbred X Angus</strain>
        <tissue>Liver</tissue>
    </source>
</reference>
<reference key="3">
    <citation type="submission" date="1999-04" db="EMBL/GenBank/DDBJ databases">
        <title>Involvement of fibroblasts and muscle cells in the expression of an extracellular proteolytic cascade in bovine skeletal muscle.</title>
        <authorList>
            <person name="Balcerzak D."/>
            <person name="Querengesser L."/>
            <person name="Dixon W.T."/>
            <person name="Baracos V.E."/>
        </authorList>
    </citation>
    <scope>NUCLEOTIDE SEQUENCE [MRNA] OF 22-218</scope>
    <source>
        <tissue>Skeletal muscle</tissue>
    </source>
</reference>
<reference key="4">
    <citation type="journal article" date="1986" name="J. Biol. Chem.">
        <title>Purification and partial amino acid sequence of a bovine cartilage-derived collagenase inhibitor.</title>
        <authorList>
            <person name="Murray J.B."/>
            <person name="Allison K."/>
            <person name="Sudhalter J."/>
            <person name="Langer R."/>
        </authorList>
    </citation>
    <scope>PROTEIN SEQUENCE OF 27-71</scope>
    <source>
        <tissue>Cartilage</tissue>
    </source>
</reference>
<reference key="5">
    <citation type="journal article" date="1989" name="J. Biol. Chem.">
        <title>Purification and characterization of two related but distinct metalloproteinase inhibitors secreted by bovine aortic endothelial cells.</title>
        <authorList>
            <person name="de Clerck Y.A."/>
            <person name="Yean T.D."/>
            <person name="Ratzkin B.J."/>
            <person name="Lu H.S."/>
            <person name="Langley K.E."/>
        </authorList>
    </citation>
    <scope>PROTEIN SEQUENCE OF 27-71</scope>
</reference>
<reference key="6">
    <citation type="journal article" date="1993" name="Biochem. J.">
        <title>Characterization of the functional domain of tissue inhibitor of metalloproteinases-2 (TIMP-2).</title>
        <authorList>
            <person name="De Clerck Y.A."/>
            <person name="Yean T.D."/>
            <person name="Lee Y."/>
            <person name="Tomich J.M."/>
            <person name="Langley K.E."/>
        </authorList>
    </citation>
    <scope>NUCLEOTIDE SEQUENCE [MRNA] OF 27-71</scope>
</reference>
<reference key="7">
    <citation type="journal article" date="1998" name="EMBO J.">
        <title>Crystal structure of the complex formed by the membrane type 1-matrix metalloproteinase with the tissue inhibitor of metalloproteinases-2, the soluble progelatinase A receptor.</title>
        <authorList>
            <person name="Fernandez-Catalan C."/>
            <person name="Bode W."/>
            <person name="Huber R."/>
            <person name="Turk D."/>
            <person name="Calvete J.J."/>
            <person name="Lichte A."/>
            <person name="Tschesche H."/>
            <person name="Maskos K."/>
        </authorList>
    </citation>
    <scope>X-RAY CRYSTALLOGRAPHY (2.75 ANGSTROMS) OF 27-210 IN COMPLEX WITH MMP-1</scope>
</reference>
<reference key="8">
    <citation type="journal article" date="2007" name="J. Mol. Biol.">
        <title>Flexibility and variability of TIMP binding: X-ray structure of the complex between collagenase-3/MMP-13 and TIMP-2.</title>
        <authorList>
            <person name="Maskos K."/>
            <person name="Lang R."/>
            <person name="Tschesche H."/>
            <person name="Bode W."/>
        </authorList>
    </citation>
    <scope>X-RAY CRYSTALLOGRAPHY (2.00 ANGSTROMS) OF 28-206 IN COMPLEX WITH MMP-13</scope>
    <scope>DISULFIDE BOND</scope>
</reference>
<accession>P16368</accession>
<accession>Q3SZU3</accession>
<accession>Q9TVB1</accession>
<dbReference type="EMBL" id="M32303">
    <property type="protein sequence ID" value="AAA30636.1"/>
    <property type="molecule type" value="mRNA"/>
</dbReference>
<dbReference type="EMBL" id="BC102710">
    <property type="protein sequence ID" value="AAI02711.1"/>
    <property type="molecule type" value="mRNA"/>
</dbReference>
<dbReference type="EMBL" id="AF144764">
    <property type="protein sequence ID" value="AAD30304.1"/>
    <property type="molecule type" value="mRNA"/>
</dbReference>
<dbReference type="PIR" id="A35996">
    <property type="entry name" value="A35996"/>
</dbReference>
<dbReference type="RefSeq" id="NP_776897.2">
    <property type="nucleotide sequence ID" value="NM_174472.4"/>
</dbReference>
<dbReference type="PDB" id="1BQQ">
    <property type="method" value="X-ray"/>
    <property type="resolution" value="2.75 A"/>
    <property type="chains" value="T=27-210"/>
</dbReference>
<dbReference type="PDB" id="1BUV">
    <property type="method" value="X-ray"/>
    <property type="resolution" value="2.75 A"/>
    <property type="chains" value="T=27-210"/>
</dbReference>
<dbReference type="PDB" id="2E2D">
    <property type="method" value="X-ray"/>
    <property type="resolution" value="2.00 A"/>
    <property type="chains" value="C=27-206"/>
</dbReference>
<dbReference type="PDBsum" id="1BQQ"/>
<dbReference type="PDBsum" id="1BUV"/>
<dbReference type="PDBsum" id="2E2D"/>
<dbReference type="SMR" id="P16368"/>
<dbReference type="FunCoup" id="P16368">
    <property type="interactions" value="362"/>
</dbReference>
<dbReference type="IntAct" id="P16368">
    <property type="interactions" value="1"/>
</dbReference>
<dbReference type="STRING" id="9913.ENSBTAP00000014476"/>
<dbReference type="MEROPS" id="I35.002"/>
<dbReference type="PaxDb" id="9913-ENSBTAP00000014476"/>
<dbReference type="GeneID" id="282093"/>
<dbReference type="KEGG" id="bta:282093"/>
<dbReference type="CTD" id="7077"/>
<dbReference type="eggNOG" id="KOG4745">
    <property type="taxonomic scope" value="Eukaryota"/>
</dbReference>
<dbReference type="InParanoid" id="P16368"/>
<dbReference type="OrthoDB" id="6041373at2759"/>
<dbReference type="EvolutionaryTrace" id="P16368"/>
<dbReference type="Proteomes" id="UP000009136">
    <property type="component" value="Unplaced"/>
</dbReference>
<dbReference type="GO" id="GO:0031012">
    <property type="term" value="C:extracellular matrix"/>
    <property type="evidence" value="ECO:0000318"/>
    <property type="project" value="GO_Central"/>
</dbReference>
<dbReference type="GO" id="GO:0005615">
    <property type="term" value="C:extracellular space"/>
    <property type="evidence" value="ECO:0000318"/>
    <property type="project" value="GO_Central"/>
</dbReference>
<dbReference type="GO" id="GO:0046872">
    <property type="term" value="F:metal ion binding"/>
    <property type="evidence" value="ECO:0007669"/>
    <property type="project" value="UniProtKB-KW"/>
</dbReference>
<dbReference type="GO" id="GO:0008191">
    <property type="term" value="F:metalloendopeptidase inhibitor activity"/>
    <property type="evidence" value="ECO:0000318"/>
    <property type="project" value="GO_Central"/>
</dbReference>
<dbReference type="GO" id="GO:0051045">
    <property type="term" value="P:negative regulation of membrane protein ectodomain proteolysis"/>
    <property type="evidence" value="ECO:0000318"/>
    <property type="project" value="GO_Central"/>
</dbReference>
<dbReference type="GO" id="GO:0034097">
    <property type="term" value="P:response to cytokine"/>
    <property type="evidence" value="ECO:0000318"/>
    <property type="project" value="GO_Central"/>
</dbReference>
<dbReference type="GO" id="GO:0009725">
    <property type="term" value="P:response to hormone"/>
    <property type="evidence" value="ECO:0000318"/>
    <property type="project" value="GO_Central"/>
</dbReference>
<dbReference type="CDD" id="cd03585">
    <property type="entry name" value="NTR_TIMP"/>
    <property type="match status" value="1"/>
</dbReference>
<dbReference type="FunFam" id="2.40.50.120:FF:000007">
    <property type="entry name" value="Metalloproteinase inhibitor 2"/>
    <property type="match status" value="1"/>
</dbReference>
<dbReference type="FunFam" id="3.90.370.10:FF:000001">
    <property type="entry name" value="Metalloproteinase inhibitor 3"/>
    <property type="match status" value="1"/>
</dbReference>
<dbReference type="Gene3D" id="2.40.50.120">
    <property type="match status" value="1"/>
</dbReference>
<dbReference type="Gene3D" id="3.90.370.10">
    <property type="entry name" value="Tissue inhibitor of metalloproteinase-1. Chain B, domain 1"/>
    <property type="match status" value="1"/>
</dbReference>
<dbReference type="InterPro" id="IPR001134">
    <property type="entry name" value="Netrin_domain"/>
</dbReference>
<dbReference type="InterPro" id="IPR001820">
    <property type="entry name" value="TIMP"/>
</dbReference>
<dbReference type="InterPro" id="IPR008993">
    <property type="entry name" value="TIMP-like_OB-fold"/>
</dbReference>
<dbReference type="InterPro" id="IPR027465">
    <property type="entry name" value="TIMP_C"/>
</dbReference>
<dbReference type="InterPro" id="IPR030490">
    <property type="entry name" value="TIMP_CS"/>
</dbReference>
<dbReference type="PANTHER" id="PTHR11844">
    <property type="entry name" value="METALLOPROTEASE INHIBITOR"/>
    <property type="match status" value="1"/>
</dbReference>
<dbReference type="PANTHER" id="PTHR11844:SF24">
    <property type="entry name" value="METALLOPROTEINASE INHIBITOR 2"/>
    <property type="match status" value="1"/>
</dbReference>
<dbReference type="Pfam" id="PF00965">
    <property type="entry name" value="TIMP"/>
    <property type="match status" value="1"/>
</dbReference>
<dbReference type="SMART" id="SM00206">
    <property type="entry name" value="NTR"/>
    <property type="match status" value="1"/>
</dbReference>
<dbReference type="SUPFAM" id="SSF50242">
    <property type="entry name" value="TIMP-like"/>
    <property type="match status" value="1"/>
</dbReference>
<dbReference type="PROSITE" id="PS50189">
    <property type="entry name" value="NTR"/>
    <property type="match status" value="1"/>
</dbReference>
<dbReference type="PROSITE" id="PS00288">
    <property type="entry name" value="TIMP"/>
    <property type="match status" value="1"/>
</dbReference>
<organism>
    <name type="scientific">Bos taurus</name>
    <name type="common">Bovine</name>
    <dbReference type="NCBI Taxonomy" id="9913"/>
    <lineage>
        <taxon>Eukaryota</taxon>
        <taxon>Metazoa</taxon>
        <taxon>Chordata</taxon>
        <taxon>Craniata</taxon>
        <taxon>Vertebrata</taxon>
        <taxon>Euteleostomi</taxon>
        <taxon>Mammalia</taxon>
        <taxon>Eutheria</taxon>
        <taxon>Laurasiatheria</taxon>
        <taxon>Artiodactyla</taxon>
        <taxon>Ruminantia</taxon>
        <taxon>Pecora</taxon>
        <taxon>Bovidae</taxon>
        <taxon>Bovinae</taxon>
        <taxon>Bos</taxon>
    </lineage>
</organism>
<comment type="function">
    <text>Complexes with metalloproteinases (such as collagenases) and irreversibly inactivates them by binding to their catalytic zinc cofactor.</text>
</comment>
<comment type="subunit">
    <text evidence="1">Interacts (via the C-terminal) with MMP2 (via the C-terminal PEX domain); the interaction inhibits the MMP2 activity.</text>
</comment>
<comment type="subcellular location">
    <subcellularLocation>
        <location>Secreted</location>
    </subcellularLocation>
</comment>
<comment type="PTM">
    <text>The activity of TIMP2 is dependent on the presence of disulfide bonds.</text>
</comment>
<comment type="similarity">
    <text evidence="6">Belongs to the protease inhibitor I35 (TIMP) family.</text>
</comment>
<keyword id="KW-0002">3D-structure</keyword>
<keyword id="KW-0903">Direct protein sequencing</keyword>
<keyword id="KW-1015">Disulfide bond</keyword>
<keyword id="KW-0479">Metal-binding</keyword>
<keyword id="KW-0481">Metalloenzyme inhibitor</keyword>
<keyword id="KW-0483">Metalloprotease inhibitor</keyword>
<keyword id="KW-0646">Protease inhibitor</keyword>
<keyword id="KW-1185">Reference proteome</keyword>
<keyword id="KW-0964">Secreted</keyword>
<keyword id="KW-0732">Signal</keyword>
<keyword id="KW-0862">Zinc</keyword>
<feature type="signal peptide" evidence="4 5">
    <location>
        <begin position="1"/>
        <end position="26"/>
    </location>
</feature>
<feature type="chain" id="PRO_0000034331" description="Metalloproteinase inhibitor 2">
    <location>
        <begin position="27"/>
        <end position="220"/>
    </location>
</feature>
<feature type="domain" description="NTR" evidence="2">
    <location>
        <begin position="27"/>
        <end position="152"/>
    </location>
</feature>
<feature type="region of interest" description="Involved in metalloproteinase-binding" evidence="3 7">
    <location>
        <begin position="27"/>
        <end position="30"/>
    </location>
</feature>
<feature type="binding site" evidence="3 7">
    <location>
        <position position="27"/>
    </location>
    <ligand>
        <name>Zn(2+)</name>
        <dbReference type="ChEBI" id="CHEBI:29105"/>
        <note>ligand shared with metalloproteinase partner</note>
    </ligand>
</feature>
<feature type="site" description="Involved in metalloproteinase-binding" evidence="3 7">
    <location>
        <position position="64"/>
    </location>
</feature>
<feature type="site" description="Involved in metalloproteinase-binding" evidence="3 7">
    <location>
        <position position="96"/>
    </location>
</feature>
<feature type="site" description="Involved in metalloproteinase-binding" evidence="3 7">
    <location>
        <position position="158"/>
    </location>
</feature>
<feature type="site" description="Involved in metalloproteinase-binding" evidence="3 7">
    <location>
        <position position="177"/>
    </location>
</feature>
<feature type="disulfide bond" evidence="3 7">
    <location>
        <begin position="27"/>
        <end position="98"/>
    </location>
</feature>
<feature type="disulfide bond" evidence="3 7">
    <location>
        <begin position="29"/>
        <end position="127"/>
    </location>
</feature>
<feature type="disulfide bond" evidence="3 7">
    <location>
        <begin position="39"/>
        <end position="152"/>
    </location>
</feature>
<feature type="disulfide bond" evidence="3 7">
    <location>
        <begin position="154"/>
        <end position="201"/>
    </location>
</feature>
<feature type="disulfide bond" evidence="3 7">
    <location>
        <begin position="159"/>
        <end position="164"/>
    </location>
</feature>
<feature type="disulfide bond" evidence="3 7">
    <location>
        <begin position="172"/>
        <end position="193"/>
    </location>
</feature>
<feature type="sequence conflict" description="In Ref. 2; AAI02711." evidence="6" ref="2">
    <original>L</original>
    <variation>M</variation>
    <location>
        <position position="15"/>
    </location>
</feature>
<feature type="sequence conflict" description="In Ref. 4; AA sequence." evidence="6" ref="4">
    <original>D</original>
    <variation>C</variation>
    <location>
        <position position="42"/>
    </location>
</feature>
<feature type="sequence conflict" description="In Ref. 4; AA sequence." evidence="6" ref="4">
    <original>D</original>
    <variation>E</variation>
    <location>
        <position position="56"/>
    </location>
</feature>
<feature type="sequence conflict" description="In Ref. 4; AA sequence." evidence="6" ref="4">
    <original>R</original>
    <variation>S</variation>
    <location>
        <position position="68"/>
    </location>
</feature>
<feature type="sequence conflict" description="In Ref. 2; AAI02711." evidence="6" ref="2">
    <original>F</original>
    <variation>L</variation>
    <location>
        <position position="88"/>
    </location>
</feature>
<feature type="sequence conflict" description="In Ref. 2; AAI02711." evidence="6" ref="2">
    <original>AA</original>
    <variation>SS</variation>
    <location>
        <begin position="94"/>
        <end position="95"/>
    </location>
</feature>
<feature type="helix" evidence="9">
    <location>
        <begin position="34"/>
        <end position="40"/>
    </location>
</feature>
<feature type="strand" evidence="9">
    <location>
        <begin position="42"/>
        <end position="59"/>
    </location>
</feature>
<feature type="strand" evidence="8">
    <location>
        <begin position="61"/>
        <end position="64"/>
    </location>
</feature>
<feature type="strand" evidence="9">
    <location>
        <begin position="65"/>
        <end position="81"/>
    </location>
</feature>
<feature type="strand" evidence="9">
    <location>
        <begin position="88"/>
        <end position="91"/>
    </location>
</feature>
<feature type="helix" evidence="9">
    <location>
        <begin position="95"/>
        <end position="97"/>
    </location>
</feature>
<feature type="strand" evidence="9">
    <location>
        <begin position="105"/>
        <end position="107"/>
    </location>
</feature>
<feature type="strand" evidence="9">
    <location>
        <begin position="109"/>
        <end position="116"/>
    </location>
</feature>
<feature type="strand" evidence="8">
    <location>
        <begin position="118"/>
        <end position="120"/>
    </location>
</feature>
<feature type="strand" evidence="9">
    <location>
        <begin position="121"/>
        <end position="123"/>
    </location>
</feature>
<feature type="strand" evidence="9">
    <location>
        <begin position="130"/>
        <end position="132"/>
    </location>
</feature>
<feature type="helix" evidence="9">
    <location>
        <begin position="133"/>
        <end position="135"/>
    </location>
</feature>
<feature type="helix" evidence="9">
    <location>
        <begin position="138"/>
        <end position="143"/>
    </location>
</feature>
<feature type="turn" evidence="9">
    <location>
        <begin position="144"/>
        <end position="146"/>
    </location>
</feature>
<feature type="helix" evidence="9">
    <location>
        <begin position="147"/>
        <end position="151"/>
    </location>
</feature>
<feature type="strand" evidence="9">
    <location>
        <begin position="154"/>
        <end position="158"/>
    </location>
</feature>
<feature type="strand" evidence="9">
    <location>
        <begin position="160"/>
        <end position="162"/>
    </location>
</feature>
<feature type="strand" evidence="9">
    <location>
        <begin position="171"/>
        <end position="174"/>
    </location>
</feature>
<feature type="helix" evidence="9">
    <location>
        <begin position="176"/>
        <end position="179"/>
    </location>
</feature>
<feature type="strand" evidence="8">
    <location>
        <begin position="183"/>
        <end position="185"/>
    </location>
</feature>
<feature type="helix" evidence="9">
    <location>
        <begin position="186"/>
        <end position="190"/>
    </location>
</feature>
<feature type="strand" evidence="9">
    <location>
        <begin position="192"/>
        <end position="195"/>
    </location>
</feature>
<feature type="strand" evidence="9">
    <location>
        <begin position="197"/>
        <end position="204"/>
    </location>
</feature>
<evidence type="ECO:0000250" key="1"/>
<evidence type="ECO:0000255" key="2">
    <source>
        <dbReference type="PROSITE-ProRule" id="PRU00295"/>
    </source>
</evidence>
<evidence type="ECO:0000269" key="3">
    <source>
    </source>
</evidence>
<evidence type="ECO:0000269" key="4">
    <source>
    </source>
</evidence>
<evidence type="ECO:0000269" key="5">
    <source>
    </source>
</evidence>
<evidence type="ECO:0000305" key="6"/>
<evidence type="ECO:0007744" key="7">
    <source>
        <dbReference type="PDB" id="2E2D"/>
    </source>
</evidence>
<evidence type="ECO:0007829" key="8">
    <source>
        <dbReference type="PDB" id="1BQQ"/>
    </source>
</evidence>
<evidence type="ECO:0007829" key="9">
    <source>
        <dbReference type="PDB" id="2E2D"/>
    </source>
</evidence>
<name>TIMP2_BOVIN</name>
<gene>
    <name type="primary">TIMP2</name>
</gene>